<dbReference type="EC" id="3.1.3.16"/>
<dbReference type="EMBL" id="AL607005">
    <property type="protein sequence ID" value="CAD40677.2"/>
    <property type="molecule type" value="Genomic_DNA"/>
</dbReference>
<dbReference type="EMBL" id="AL731639">
    <property type="protein sequence ID" value="CAE05356.1"/>
    <property type="molecule type" value="Genomic_DNA"/>
</dbReference>
<dbReference type="EMBL" id="AP008210">
    <property type="protein sequence ID" value="BAF14614.2"/>
    <property type="status" value="ALT_SEQ"/>
    <property type="molecule type" value="Genomic_DNA"/>
</dbReference>
<dbReference type="EMBL" id="AP014960">
    <property type="protein sequence ID" value="BAS89062.1"/>
    <property type="molecule type" value="Genomic_DNA"/>
</dbReference>
<dbReference type="EMBL" id="CM000141">
    <property type="protein sequence ID" value="EAZ30622.1"/>
    <property type="molecule type" value="Genomic_DNA"/>
</dbReference>
<dbReference type="EMBL" id="AK243107">
    <property type="protein sequence ID" value="BAH01452.1"/>
    <property type="molecule type" value="mRNA"/>
</dbReference>
<dbReference type="RefSeq" id="XP_015635432.1">
    <property type="nucleotide sequence ID" value="XM_015779946.1"/>
</dbReference>
<dbReference type="RefSeq" id="XP_015635433.1">
    <property type="nucleotide sequence ID" value="XM_015779947.1"/>
</dbReference>
<dbReference type="RefSeq" id="XP_015635434.1">
    <property type="nucleotide sequence ID" value="XM_015779948.1"/>
</dbReference>
<dbReference type="SMR" id="Q7XVF9"/>
<dbReference type="FunCoup" id="Q7XVF9">
    <property type="interactions" value="549"/>
</dbReference>
<dbReference type="STRING" id="39947.Q7XVF9"/>
<dbReference type="CAZy" id="GH13">
    <property type="family name" value="Glycoside Hydrolase Family 13"/>
</dbReference>
<dbReference type="PaxDb" id="39947-Q7XVF9"/>
<dbReference type="EnsemblPlants" id="Os04t0403701-01">
    <property type="protein sequence ID" value="Os04t0403701-01"/>
    <property type="gene ID" value="Os04g0403701"/>
</dbReference>
<dbReference type="Gramene" id="Os04t0403701-01">
    <property type="protein sequence ID" value="Os04t0403701-01"/>
    <property type="gene ID" value="Os04g0403701"/>
</dbReference>
<dbReference type="KEGG" id="dosa:Os04g0403600"/>
<dbReference type="eggNOG" id="KOG0700">
    <property type="taxonomic scope" value="Eukaryota"/>
</dbReference>
<dbReference type="HOGENOM" id="CLU_013173_12_3_1"/>
<dbReference type="InParanoid" id="Q7XVF9"/>
<dbReference type="OMA" id="TMSHRVS"/>
<dbReference type="OrthoDB" id="420076at2759"/>
<dbReference type="Proteomes" id="UP000000763">
    <property type="component" value="Chromosome 4"/>
</dbReference>
<dbReference type="Proteomes" id="UP000007752">
    <property type="component" value="Chromosome 4"/>
</dbReference>
<dbReference type="Proteomes" id="UP000059680">
    <property type="component" value="Chromosome 4"/>
</dbReference>
<dbReference type="GO" id="GO:0046872">
    <property type="term" value="F:metal ion binding"/>
    <property type="evidence" value="ECO:0007669"/>
    <property type="project" value="UniProtKB-KW"/>
</dbReference>
<dbReference type="GO" id="GO:0004722">
    <property type="term" value="F:protein serine/threonine phosphatase activity"/>
    <property type="evidence" value="ECO:0007669"/>
    <property type="project" value="UniProtKB-EC"/>
</dbReference>
<dbReference type="GO" id="GO:0007165">
    <property type="term" value="P:signal transduction"/>
    <property type="evidence" value="ECO:0000318"/>
    <property type="project" value="GO_Central"/>
</dbReference>
<dbReference type="CDD" id="cd00143">
    <property type="entry name" value="PP2Cc"/>
    <property type="match status" value="1"/>
</dbReference>
<dbReference type="FunFam" id="3.60.40.10:FF:000043">
    <property type="entry name" value="Probable protein phosphatase 2C 40"/>
    <property type="match status" value="1"/>
</dbReference>
<dbReference type="Gene3D" id="3.60.40.10">
    <property type="entry name" value="PPM-type phosphatase domain"/>
    <property type="match status" value="1"/>
</dbReference>
<dbReference type="InterPro" id="IPR015655">
    <property type="entry name" value="PP2C"/>
</dbReference>
<dbReference type="InterPro" id="IPR036457">
    <property type="entry name" value="PPM-type-like_dom_sf"/>
</dbReference>
<dbReference type="InterPro" id="IPR001932">
    <property type="entry name" value="PPM-type_phosphatase-like_dom"/>
</dbReference>
<dbReference type="PANTHER" id="PTHR13832:SF803">
    <property type="entry name" value="PROTEIN PHOSPHATASE 1G"/>
    <property type="match status" value="1"/>
</dbReference>
<dbReference type="PANTHER" id="PTHR13832">
    <property type="entry name" value="PROTEIN PHOSPHATASE 2C"/>
    <property type="match status" value="1"/>
</dbReference>
<dbReference type="Pfam" id="PF00481">
    <property type="entry name" value="PP2C"/>
    <property type="match status" value="1"/>
</dbReference>
<dbReference type="SMART" id="SM00332">
    <property type="entry name" value="PP2Cc"/>
    <property type="match status" value="1"/>
</dbReference>
<dbReference type="SUPFAM" id="SSF81606">
    <property type="entry name" value="PP2C-like"/>
    <property type="match status" value="1"/>
</dbReference>
<dbReference type="PROSITE" id="PS51746">
    <property type="entry name" value="PPM_2"/>
    <property type="match status" value="1"/>
</dbReference>
<comment type="catalytic activity">
    <reaction>
        <text>O-phospho-L-seryl-[protein] + H2O = L-seryl-[protein] + phosphate</text>
        <dbReference type="Rhea" id="RHEA:20629"/>
        <dbReference type="Rhea" id="RHEA-COMP:9863"/>
        <dbReference type="Rhea" id="RHEA-COMP:11604"/>
        <dbReference type="ChEBI" id="CHEBI:15377"/>
        <dbReference type="ChEBI" id="CHEBI:29999"/>
        <dbReference type="ChEBI" id="CHEBI:43474"/>
        <dbReference type="ChEBI" id="CHEBI:83421"/>
        <dbReference type="EC" id="3.1.3.16"/>
    </reaction>
</comment>
<comment type="catalytic activity">
    <reaction>
        <text>O-phospho-L-threonyl-[protein] + H2O = L-threonyl-[protein] + phosphate</text>
        <dbReference type="Rhea" id="RHEA:47004"/>
        <dbReference type="Rhea" id="RHEA-COMP:11060"/>
        <dbReference type="Rhea" id="RHEA-COMP:11605"/>
        <dbReference type="ChEBI" id="CHEBI:15377"/>
        <dbReference type="ChEBI" id="CHEBI:30013"/>
        <dbReference type="ChEBI" id="CHEBI:43474"/>
        <dbReference type="ChEBI" id="CHEBI:61977"/>
        <dbReference type="EC" id="3.1.3.16"/>
    </reaction>
</comment>
<comment type="cofactor">
    <cofactor evidence="1">
        <name>Mg(2+)</name>
        <dbReference type="ChEBI" id="CHEBI:18420"/>
    </cofactor>
    <cofactor evidence="1">
        <name>Mn(2+)</name>
        <dbReference type="ChEBI" id="CHEBI:29035"/>
    </cofactor>
    <text evidence="1">Binds 2 magnesium or manganese ions per subunit.</text>
</comment>
<comment type="similarity">
    <text evidence="3">Belongs to the PP2C family.</text>
</comment>
<comment type="sequence caution" evidence="3">
    <conflict type="erroneous gene model prediction">
        <sequence resource="EMBL-CDS" id="BAF14614"/>
    </conflict>
</comment>
<proteinExistence type="evidence at transcript level"/>
<gene>
    <name type="ordered locus">Os04g0403701</name>
    <name type="ordered locus">LOC_Os04g33080</name>
    <name type="ORF">OJ000315_02.1</name>
    <name type="ORF">OsJ_014105</name>
    <name type="ORF">OSJNBb0118P14.8</name>
</gene>
<sequence>MVDEELFDKSSNDHSISSEEEDMLVRSYSNLNVSFGYHCNSYQCFSLDTDEYDISPNKRLETNTMMTSQNGSFTCLSGAAISANFTLANTNICKGLIGEEILPELDSPNSFRKIVSSPSMSRLDLLSTSQGSPVSTESSIFEISKNIWRSSAPTTVSSNFLTSTEIKMAGGAAGEDRVQAVCSEKNGWLICGIYDGFNGRDAADFLAVTLYDNIVYYLYLLECRIKQENGLYGSPEGSLNGVKSELTLAMRFAENEDVKFSETFRAGVLKCLTTAVEQAENDFLCMVEQEMDDRPDLVSVGSCVLVVLLHGTDLCILNLGDSRAVLASVPSSGMDKLKAVQLTEIHSLENPLEYQKLLADHPNEPSVVMGNKIKGKLKVTRAFGVGYLKQKKLNDALMGILRVRNLCSPPYVYTNPHTVSHKVTEDDLFVVLGSDGLFDFFSNDEVVQLVYQFMHDNPIGDPAKYLIEQLLLKAAKEAALTAEELMRIPVGSRRKYHDDVTIIVIILGNAQRTMTASTSL</sequence>
<name>P2C39_ORYSJ</name>
<feature type="chain" id="PRO_0000363286" description="Probable protein phosphatase 2C 39">
    <location>
        <begin position="1"/>
        <end position="520"/>
    </location>
</feature>
<feature type="domain" description="PPM-type phosphatase" evidence="2">
    <location>
        <begin position="160"/>
        <end position="507"/>
    </location>
</feature>
<feature type="binding site" evidence="1">
    <location>
        <position position="195"/>
    </location>
    <ligand>
        <name>Mn(2+)</name>
        <dbReference type="ChEBI" id="CHEBI:29035"/>
        <label>1</label>
    </ligand>
</feature>
<feature type="binding site" evidence="1">
    <location>
        <position position="195"/>
    </location>
    <ligand>
        <name>Mn(2+)</name>
        <dbReference type="ChEBI" id="CHEBI:29035"/>
        <label>2</label>
    </ligand>
</feature>
<feature type="binding site" evidence="1">
    <location>
        <position position="196"/>
    </location>
    <ligand>
        <name>Mn(2+)</name>
        <dbReference type="ChEBI" id="CHEBI:29035"/>
        <label>1</label>
    </ligand>
</feature>
<feature type="binding site" evidence="1">
    <location>
        <position position="435"/>
    </location>
    <ligand>
        <name>Mn(2+)</name>
        <dbReference type="ChEBI" id="CHEBI:29035"/>
        <label>2</label>
    </ligand>
</feature>
<feature type="binding site" evidence="1">
    <location>
        <position position="498"/>
    </location>
    <ligand>
        <name>Mn(2+)</name>
        <dbReference type="ChEBI" id="CHEBI:29035"/>
        <label>2</label>
    </ligand>
</feature>
<organism>
    <name type="scientific">Oryza sativa subsp. japonica</name>
    <name type="common">Rice</name>
    <dbReference type="NCBI Taxonomy" id="39947"/>
    <lineage>
        <taxon>Eukaryota</taxon>
        <taxon>Viridiplantae</taxon>
        <taxon>Streptophyta</taxon>
        <taxon>Embryophyta</taxon>
        <taxon>Tracheophyta</taxon>
        <taxon>Spermatophyta</taxon>
        <taxon>Magnoliopsida</taxon>
        <taxon>Liliopsida</taxon>
        <taxon>Poales</taxon>
        <taxon>Poaceae</taxon>
        <taxon>BOP clade</taxon>
        <taxon>Oryzoideae</taxon>
        <taxon>Oryzeae</taxon>
        <taxon>Oryzinae</taxon>
        <taxon>Oryza</taxon>
        <taxon>Oryza sativa</taxon>
    </lineage>
</organism>
<evidence type="ECO:0000250" key="1"/>
<evidence type="ECO:0000255" key="2">
    <source>
        <dbReference type="PROSITE-ProRule" id="PRU01082"/>
    </source>
</evidence>
<evidence type="ECO:0000305" key="3"/>
<keyword id="KW-0378">Hydrolase</keyword>
<keyword id="KW-0460">Magnesium</keyword>
<keyword id="KW-0464">Manganese</keyword>
<keyword id="KW-0479">Metal-binding</keyword>
<keyword id="KW-0904">Protein phosphatase</keyword>
<keyword id="KW-1185">Reference proteome</keyword>
<protein>
    <recommendedName>
        <fullName>Probable protein phosphatase 2C 39</fullName>
        <shortName>OsPP2C39</shortName>
        <ecNumber>3.1.3.16</ecNumber>
    </recommendedName>
</protein>
<reference key="1">
    <citation type="journal article" date="2002" name="Nature">
        <title>Sequence and analysis of rice chromosome 4.</title>
        <authorList>
            <person name="Feng Q."/>
            <person name="Zhang Y."/>
            <person name="Hao P."/>
            <person name="Wang S."/>
            <person name="Fu G."/>
            <person name="Huang Y."/>
            <person name="Li Y."/>
            <person name="Zhu J."/>
            <person name="Liu Y."/>
            <person name="Hu X."/>
            <person name="Jia P."/>
            <person name="Zhang Y."/>
            <person name="Zhao Q."/>
            <person name="Ying K."/>
            <person name="Yu S."/>
            <person name="Tang Y."/>
            <person name="Weng Q."/>
            <person name="Zhang L."/>
            <person name="Lu Y."/>
            <person name="Mu J."/>
            <person name="Lu Y."/>
            <person name="Zhang L.S."/>
            <person name="Yu Z."/>
            <person name="Fan D."/>
            <person name="Liu X."/>
            <person name="Lu T."/>
            <person name="Li C."/>
            <person name="Wu Y."/>
            <person name="Sun T."/>
            <person name="Lei H."/>
            <person name="Li T."/>
            <person name="Hu H."/>
            <person name="Guan J."/>
            <person name="Wu M."/>
            <person name="Zhang R."/>
            <person name="Zhou B."/>
            <person name="Chen Z."/>
            <person name="Chen L."/>
            <person name="Jin Z."/>
            <person name="Wang R."/>
            <person name="Yin H."/>
            <person name="Cai Z."/>
            <person name="Ren S."/>
            <person name="Lv G."/>
            <person name="Gu W."/>
            <person name="Zhu G."/>
            <person name="Tu Y."/>
            <person name="Jia J."/>
            <person name="Zhang Y."/>
            <person name="Chen J."/>
            <person name="Kang H."/>
            <person name="Chen X."/>
            <person name="Shao C."/>
            <person name="Sun Y."/>
            <person name="Hu Q."/>
            <person name="Zhang X."/>
            <person name="Zhang W."/>
            <person name="Wang L."/>
            <person name="Ding C."/>
            <person name="Sheng H."/>
            <person name="Gu J."/>
            <person name="Chen S."/>
            <person name="Ni L."/>
            <person name="Zhu F."/>
            <person name="Chen W."/>
            <person name="Lan L."/>
            <person name="Lai Y."/>
            <person name="Cheng Z."/>
            <person name="Gu M."/>
            <person name="Jiang J."/>
            <person name="Li J."/>
            <person name="Hong G."/>
            <person name="Xue Y."/>
            <person name="Han B."/>
        </authorList>
    </citation>
    <scope>NUCLEOTIDE SEQUENCE [LARGE SCALE GENOMIC DNA]</scope>
    <source>
        <strain>cv. Nipponbare</strain>
    </source>
</reference>
<reference key="2">
    <citation type="journal article" date="2005" name="Nature">
        <title>The map-based sequence of the rice genome.</title>
        <authorList>
            <consortium name="International rice genome sequencing project (IRGSP)"/>
        </authorList>
    </citation>
    <scope>NUCLEOTIDE SEQUENCE [LARGE SCALE GENOMIC DNA]</scope>
    <source>
        <strain>cv. Nipponbare</strain>
    </source>
</reference>
<reference key="3">
    <citation type="journal article" date="2008" name="Nucleic Acids Res.">
        <title>The rice annotation project database (RAP-DB): 2008 update.</title>
        <authorList>
            <consortium name="The rice annotation project (RAP)"/>
        </authorList>
    </citation>
    <scope>GENOME REANNOTATION</scope>
    <source>
        <strain>cv. Nipponbare</strain>
    </source>
</reference>
<reference key="4">
    <citation type="journal article" date="2013" name="Rice">
        <title>Improvement of the Oryza sativa Nipponbare reference genome using next generation sequence and optical map data.</title>
        <authorList>
            <person name="Kawahara Y."/>
            <person name="de la Bastide M."/>
            <person name="Hamilton J.P."/>
            <person name="Kanamori H."/>
            <person name="McCombie W.R."/>
            <person name="Ouyang S."/>
            <person name="Schwartz D.C."/>
            <person name="Tanaka T."/>
            <person name="Wu J."/>
            <person name="Zhou S."/>
            <person name="Childs K.L."/>
            <person name="Davidson R.M."/>
            <person name="Lin H."/>
            <person name="Quesada-Ocampo L."/>
            <person name="Vaillancourt B."/>
            <person name="Sakai H."/>
            <person name="Lee S.S."/>
            <person name="Kim J."/>
            <person name="Numa H."/>
            <person name="Itoh T."/>
            <person name="Buell C.R."/>
            <person name="Matsumoto T."/>
        </authorList>
    </citation>
    <scope>GENOME REANNOTATION</scope>
    <source>
        <strain>cv. Nipponbare</strain>
    </source>
</reference>
<reference key="5">
    <citation type="journal article" date="2005" name="PLoS Biol.">
        <title>The genomes of Oryza sativa: a history of duplications.</title>
        <authorList>
            <person name="Yu J."/>
            <person name="Wang J."/>
            <person name="Lin W."/>
            <person name="Li S."/>
            <person name="Li H."/>
            <person name="Zhou J."/>
            <person name="Ni P."/>
            <person name="Dong W."/>
            <person name="Hu S."/>
            <person name="Zeng C."/>
            <person name="Zhang J."/>
            <person name="Zhang Y."/>
            <person name="Li R."/>
            <person name="Xu Z."/>
            <person name="Li S."/>
            <person name="Li X."/>
            <person name="Zheng H."/>
            <person name="Cong L."/>
            <person name="Lin L."/>
            <person name="Yin J."/>
            <person name="Geng J."/>
            <person name="Li G."/>
            <person name="Shi J."/>
            <person name="Liu J."/>
            <person name="Lv H."/>
            <person name="Li J."/>
            <person name="Wang J."/>
            <person name="Deng Y."/>
            <person name="Ran L."/>
            <person name="Shi X."/>
            <person name="Wang X."/>
            <person name="Wu Q."/>
            <person name="Li C."/>
            <person name="Ren X."/>
            <person name="Wang J."/>
            <person name="Wang X."/>
            <person name="Li D."/>
            <person name="Liu D."/>
            <person name="Zhang X."/>
            <person name="Ji Z."/>
            <person name="Zhao W."/>
            <person name="Sun Y."/>
            <person name="Zhang Z."/>
            <person name="Bao J."/>
            <person name="Han Y."/>
            <person name="Dong L."/>
            <person name="Ji J."/>
            <person name="Chen P."/>
            <person name="Wu S."/>
            <person name="Liu J."/>
            <person name="Xiao Y."/>
            <person name="Bu D."/>
            <person name="Tan J."/>
            <person name="Yang L."/>
            <person name="Ye C."/>
            <person name="Zhang J."/>
            <person name="Xu J."/>
            <person name="Zhou Y."/>
            <person name="Yu Y."/>
            <person name="Zhang B."/>
            <person name="Zhuang S."/>
            <person name="Wei H."/>
            <person name="Liu B."/>
            <person name="Lei M."/>
            <person name="Yu H."/>
            <person name="Li Y."/>
            <person name="Xu H."/>
            <person name="Wei S."/>
            <person name="He X."/>
            <person name="Fang L."/>
            <person name="Zhang Z."/>
            <person name="Zhang Y."/>
            <person name="Huang X."/>
            <person name="Su Z."/>
            <person name="Tong W."/>
            <person name="Li J."/>
            <person name="Tong Z."/>
            <person name="Li S."/>
            <person name="Ye J."/>
            <person name="Wang L."/>
            <person name="Fang L."/>
            <person name="Lei T."/>
            <person name="Chen C.-S."/>
            <person name="Chen H.-C."/>
            <person name="Xu Z."/>
            <person name="Li H."/>
            <person name="Huang H."/>
            <person name="Zhang F."/>
            <person name="Xu H."/>
            <person name="Li N."/>
            <person name="Zhao C."/>
            <person name="Li S."/>
            <person name="Dong L."/>
            <person name="Huang Y."/>
            <person name="Li L."/>
            <person name="Xi Y."/>
            <person name="Qi Q."/>
            <person name="Li W."/>
            <person name="Zhang B."/>
            <person name="Hu W."/>
            <person name="Zhang Y."/>
            <person name="Tian X."/>
            <person name="Jiao Y."/>
            <person name="Liang X."/>
            <person name="Jin J."/>
            <person name="Gao L."/>
            <person name="Zheng W."/>
            <person name="Hao B."/>
            <person name="Liu S.-M."/>
            <person name="Wang W."/>
            <person name="Yuan L."/>
            <person name="Cao M."/>
            <person name="McDermott J."/>
            <person name="Samudrala R."/>
            <person name="Wang J."/>
            <person name="Wong G.K.-S."/>
            <person name="Yang H."/>
        </authorList>
    </citation>
    <scope>NUCLEOTIDE SEQUENCE [LARGE SCALE GENOMIC DNA]</scope>
    <source>
        <strain>cv. Nipponbare</strain>
    </source>
</reference>
<reference key="6">
    <citation type="submission" date="2006-10" db="EMBL/GenBank/DDBJ databases">
        <title>Oryza sativa full length cDNA.</title>
        <authorList>
            <consortium name="The rice full-length cDNA consortium"/>
        </authorList>
    </citation>
    <scope>NUCLEOTIDE SEQUENCE [LARGE SCALE MRNA]</scope>
    <source>
        <strain>cv. Nipponbare</strain>
    </source>
</reference>
<reference key="7">
    <citation type="journal article" date="2008" name="BMC Genomics">
        <title>Genome-wide and expression analysis of protein phosphatase 2C in rice and Arabidopsis.</title>
        <authorList>
            <person name="Xue T."/>
            <person name="Wang D."/>
            <person name="Zhang S."/>
            <person name="Ehlting J."/>
            <person name="Ni F."/>
            <person name="Jacab S."/>
            <person name="Zheng C."/>
            <person name="Zhong Y."/>
        </authorList>
    </citation>
    <scope>GENE FAMILY</scope>
    <scope>NOMENCLATURE</scope>
</reference>
<accession>Q7XVF9</accession>
<accession>A0A0P0W9R4</accession>
<accession>Q0JDH3</accession>